<proteinExistence type="inferred from homology"/>
<feature type="chain" id="PRO_1000146958" description="Exosome complex component Rrp41">
    <location>
        <begin position="1"/>
        <end position="246"/>
    </location>
</feature>
<sequence>MKKPPVPLLQNGLRADGRAPDQMREVQIQVGTVSNADGSAVVSYGATTAVAAVYGPREMHPRHLSLPDRGVMRVRYHMAPFSTKDERKSPTPSRREIEISKVLREALEPAVMLEQYPRSRIDVFIEILQADGSTRVASLTAASLALADAGIYMRDLVVGVSVGLVDGTVVLDLNGLEDNYGEGDMPVGYMPNLRRFTLLQLDGAWTREKFLEALGLAVKGAEYVYQVAREALKNKYMAIAEEIYGR</sequence>
<protein>
    <recommendedName>
        <fullName evidence="1">Exosome complex component Rrp41</fullName>
        <ecNumber evidence="1">3.1.13.-</ecNumber>
    </recommendedName>
</protein>
<comment type="function">
    <text evidence="1">Catalytic component of the exosome, which is a complex involved in RNA degradation. Has 3'-&gt;5' exoribonuclease activity. Can also synthesize heteromeric RNA-tails.</text>
</comment>
<comment type="subunit">
    <text evidence="1">Component of the archaeal exosome complex. Forms a hexameric ring-like arrangement composed of 3 Rrp41-Rrp42 heterodimers. The hexameric ring associates with a trimer of Rrp4 and/or Csl4 subunits.</text>
</comment>
<comment type="subcellular location">
    <subcellularLocation>
        <location evidence="1">Cytoplasm</location>
    </subcellularLocation>
</comment>
<comment type="similarity">
    <text evidence="1">Belongs to the RNase PH family. Rrp41 subfamily.</text>
</comment>
<name>RRP41_PYRCJ</name>
<keyword id="KW-0963">Cytoplasm</keyword>
<keyword id="KW-0269">Exonuclease</keyword>
<keyword id="KW-0271">Exosome</keyword>
<keyword id="KW-0378">Hydrolase</keyword>
<keyword id="KW-0540">Nuclease</keyword>
<evidence type="ECO:0000255" key="1">
    <source>
        <dbReference type="HAMAP-Rule" id="MF_00591"/>
    </source>
</evidence>
<dbReference type="EC" id="3.1.13.-" evidence="1"/>
<dbReference type="EMBL" id="CP000561">
    <property type="protein sequence ID" value="ABO08358.1"/>
    <property type="molecule type" value="Genomic_DNA"/>
</dbReference>
<dbReference type="RefSeq" id="WP_011849616.1">
    <property type="nucleotide sequence ID" value="NC_009073.1"/>
</dbReference>
<dbReference type="SMR" id="A3MUP1"/>
<dbReference type="STRING" id="410359.Pcal_0933"/>
<dbReference type="GeneID" id="4908918"/>
<dbReference type="KEGG" id="pcl:Pcal_0933"/>
<dbReference type="eggNOG" id="arCOG01575">
    <property type="taxonomic scope" value="Archaea"/>
</dbReference>
<dbReference type="HOGENOM" id="CLU_063514_0_0_2"/>
<dbReference type="OrthoDB" id="24266at2157"/>
<dbReference type="Proteomes" id="UP000001431">
    <property type="component" value="Chromosome"/>
</dbReference>
<dbReference type="GO" id="GO:0000177">
    <property type="term" value="C:cytoplasmic exosome (RNase complex)"/>
    <property type="evidence" value="ECO:0007669"/>
    <property type="project" value="TreeGrafter"/>
</dbReference>
<dbReference type="GO" id="GO:0000175">
    <property type="term" value="F:3'-5'-RNA exonuclease activity"/>
    <property type="evidence" value="ECO:0007669"/>
    <property type="project" value="UniProtKB-UniRule"/>
</dbReference>
<dbReference type="GO" id="GO:0003723">
    <property type="term" value="F:RNA binding"/>
    <property type="evidence" value="ECO:0007669"/>
    <property type="project" value="TreeGrafter"/>
</dbReference>
<dbReference type="GO" id="GO:0010467">
    <property type="term" value="P:gene expression"/>
    <property type="evidence" value="ECO:0007669"/>
    <property type="project" value="UniProtKB-ARBA"/>
</dbReference>
<dbReference type="GO" id="GO:0016075">
    <property type="term" value="P:rRNA catabolic process"/>
    <property type="evidence" value="ECO:0007669"/>
    <property type="project" value="TreeGrafter"/>
</dbReference>
<dbReference type="CDD" id="cd11366">
    <property type="entry name" value="RNase_PH_archRRP41"/>
    <property type="match status" value="1"/>
</dbReference>
<dbReference type="FunFam" id="3.30.230.70:FF:000004">
    <property type="entry name" value="Exosome complex component Rrp41"/>
    <property type="match status" value="1"/>
</dbReference>
<dbReference type="Gene3D" id="3.30.230.70">
    <property type="entry name" value="GHMP Kinase, N-terminal domain"/>
    <property type="match status" value="1"/>
</dbReference>
<dbReference type="HAMAP" id="MF_00591">
    <property type="entry name" value="Exosome_Rrp41"/>
    <property type="match status" value="1"/>
</dbReference>
<dbReference type="InterPro" id="IPR001247">
    <property type="entry name" value="ExoRNase_PH_dom1"/>
</dbReference>
<dbReference type="InterPro" id="IPR015847">
    <property type="entry name" value="ExoRNase_PH_dom2"/>
</dbReference>
<dbReference type="InterPro" id="IPR036345">
    <property type="entry name" value="ExoRNase_PH_dom2_sf"/>
</dbReference>
<dbReference type="InterPro" id="IPR027408">
    <property type="entry name" value="PNPase/RNase_PH_dom_sf"/>
</dbReference>
<dbReference type="InterPro" id="IPR020568">
    <property type="entry name" value="Ribosomal_Su5_D2-typ_SF"/>
</dbReference>
<dbReference type="InterPro" id="IPR050080">
    <property type="entry name" value="RNase_PH"/>
</dbReference>
<dbReference type="InterPro" id="IPR011807">
    <property type="entry name" value="Rrp41"/>
</dbReference>
<dbReference type="NCBIfam" id="TIGR02065">
    <property type="entry name" value="ECX1"/>
    <property type="match status" value="1"/>
</dbReference>
<dbReference type="PANTHER" id="PTHR11953">
    <property type="entry name" value="EXOSOME COMPLEX COMPONENT"/>
    <property type="match status" value="1"/>
</dbReference>
<dbReference type="PANTHER" id="PTHR11953:SF0">
    <property type="entry name" value="EXOSOME COMPLEX COMPONENT RRP41"/>
    <property type="match status" value="1"/>
</dbReference>
<dbReference type="Pfam" id="PF01138">
    <property type="entry name" value="RNase_PH"/>
    <property type="match status" value="1"/>
</dbReference>
<dbReference type="Pfam" id="PF03725">
    <property type="entry name" value="RNase_PH_C"/>
    <property type="match status" value="1"/>
</dbReference>
<dbReference type="SUPFAM" id="SSF55666">
    <property type="entry name" value="Ribonuclease PH domain 2-like"/>
    <property type="match status" value="1"/>
</dbReference>
<dbReference type="SUPFAM" id="SSF54211">
    <property type="entry name" value="Ribosomal protein S5 domain 2-like"/>
    <property type="match status" value="1"/>
</dbReference>
<accession>A3MUP1</accession>
<reference key="1">
    <citation type="submission" date="2007-02" db="EMBL/GenBank/DDBJ databases">
        <title>Complete sequence of Pyrobaculum calidifontis JCM 11548.</title>
        <authorList>
            <consortium name="US DOE Joint Genome Institute"/>
            <person name="Copeland A."/>
            <person name="Lucas S."/>
            <person name="Lapidus A."/>
            <person name="Barry K."/>
            <person name="Glavina del Rio T."/>
            <person name="Dalin E."/>
            <person name="Tice H."/>
            <person name="Pitluck S."/>
            <person name="Chain P."/>
            <person name="Malfatti S."/>
            <person name="Shin M."/>
            <person name="Vergez L."/>
            <person name="Schmutz J."/>
            <person name="Larimer F."/>
            <person name="Land M."/>
            <person name="Hauser L."/>
            <person name="Kyrpides N."/>
            <person name="Mikhailova N."/>
            <person name="Cozen A.E."/>
            <person name="Fitz-Gibbon S.T."/>
            <person name="House C.H."/>
            <person name="Saltikov C."/>
            <person name="Lowe T.M."/>
            <person name="Richardson P."/>
        </authorList>
    </citation>
    <scope>NUCLEOTIDE SEQUENCE [LARGE SCALE GENOMIC DNA]</scope>
    <source>
        <strain>DSM 21063 / JCM 11548 / VA1</strain>
    </source>
</reference>
<organism>
    <name type="scientific">Pyrobaculum calidifontis (strain DSM 21063 / JCM 11548 / VA1)</name>
    <dbReference type="NCBI Taxonomy" id="410359"/>
    <lineage>
        <taxon>Archaea</taxon>
        <taxon>Thermoproteota</taxon>
        <taxon>Thermoprotei</taxon>
        <taxon>Thermoproteales</taxon>
        <taxon>Thermoproteaceae</taxon>
        <taxon>Pyrobaculum</taxon>
    </lineage>
</organism>
<gene>
    <name evidence="1" type="primary">rrp41</name>
    <name type="ordered locus">Pcal_0933</name>
</gene>